<feature type="chain" id="PRO_1000055413" description="Large ribosomal subunit protein uL13">
    <location>
        <begin position="1"/>
        <end position="144"/>
    </location>
</feature>
<accession>Q6KI61</accession>
<protein>
    <recommendedName>
        <fullName evidence="1">Large ribosomal subunit protein uL13</fullName>
    </recommendedName>
    <alternativeName>
        <fullName evidence="2">50S ribosomal protein L13</fullName>
    </alternativeName>
</protein>
<gene>
    <name evidence="1" type="primary">rplM</name>
    <name type="ordered locus">MMOB2290</name>
</gene>
<reference key="1">
    <citation type="journal article" date="2004" name="Genome Res.">
        <title>The complete genome and proteome of Mycoplasma mobile.</title>
        <authorList>
            <person name="Jaffe J.D."/>
            <person name="Stange-Thomann N."/>
            <person name="Smith C."/>
            <person name="DeCaprio D."/>
            <person name="Fisher S."/>
            <person name="Butler J."/>
            <person name="Calvo S."/>
            <person name="Elkins T."/>
            <person name="FitzGerald M.G."/>
            <person name="Hafez N."/>
            <person name="Kodira C.D."/>
            <person name="Major J."/>
            <person name="Wang S."/>
            <person name="Wilkinson J."/>
            <person name="Nicol R."/>
            <person name="Nusbaum C."/>
            <person name="Birren B."/>
            <person name="Berg H.C."/>
            <person name="Church G.M."/>
        </authorList>
    </citation>
    <scope>NUCLEOTIDE SEQUENCE [LARGE SCALE GENOMIC DNA]</scope>
    <source>
        <strain>ATCC 43663 / NCTC 11711 / 163 K</strain>
    </source>
</reference>
<organism>
    <name type="scientific">Mycoplasma mobile (strain ATCC 43663 / 163K / NCTC 11711)</name>
    <name type="common">Mesomycoplasma mobile</name>
    <dbReference type="NCBI Taxonomy" id="267748"/>
    <lineage>
        <taxon>Bacteria</taxon>
        <taxon>Bacillati</taxon>
        <taxon>Mycoplasmatota</taxon>
        <taxon>Mycoplasmoidales</taxon>
        <taxon>Metamycoplasmataceae</taxon>
        <taxon>Mesomycoplasma</taxon>
    </lineage>
</organism>
<sequence>MRQTTIIRHKETDKKWFVVDAEGQVLGRLASVVASYLRGKNKPTFTPNVDMGDNIIVINADKVVLTAKKEDDKIYYSSSGYNGGLKAINARDLRAKKPFALVEKAVKGMIPHTKLGRKQFGNLYVYAGREHNHEAQKPEVLEVK</sequence>
<proteinExistence type="inferred from homology"/>
<keyword id="KW-1185">Reference proteome</keyword>
<keyword id="KW-0687">Ribonucleoprotein</keyword>
<keyword id="KW-0689">Ribosomal protein</keyword>
<comment type="function">
    <text evidence="1">This protein is one of the early assembly proteins of the 50S ribosomal subunit, although it is not seen to bind rRNA by itself. It is important during the early stages of 50S assembly.</text>
</comment>
<comment type="subunit">
    <text evidence="1">Part of the 50S ribosomal subunit.</text>
</comment>
<comment type="similarity">
    <text evidence="1">Belongs to the universal ribosomal protein uL13 family.</text>
</comment>
<dbReference type="EMBL" id="AE017308">
    <property type="protein sequence ID" value="AAT27715.1"/>
    <property type="molecule type" value="Genomic_DNA"/>
</dbReference>
<dbReference type="RefSeq" id="WP_011264749.1">
    <property type="nucleotide sequence ID" value="NC_006908.1"/>
</dbReference>
<dbReference type="SMR" id="Q6KI61"/>
<dbReference type="STRING" id="267748.MMOB2290"/>
<dbReference type="KEGG" id="mmo:MMOB2290"/>
<dbReference type="eggNOG" id="COG0102">
    <property type="taxonomic scope" value="Bacteria"/>
</dbReference>
<dbReference type="HOGENOM" id="CLU_082184_2_2_14"/>
<dbReference type="OrthoDB" id="9801330at2"/>
<dbReference type="Proteomes" id="UP000009072">
    <property type="component" value="Chromosome"/>
</dbReference>
<dbReference type="GO" id="GO:0022625">
    <property type="term" value="C:cytosolic large ribosomal subunit"/>
    <property type="evidence" value="ECO:0007669"/>
    <property type="project" value="TreeGrafter"/>
</dbReference>
<dbReference type="GO" id="GO:0003729">
    <property type="term" value="F:mRNA binding"/>
    <property type="evidence" value="ECO:0007669"/>
    <property type="project" value="TreeGrafter"/>
</dbReference>
<dbReference type="GO" id="GO:0003735">
    <property type="term" value="F:structural constituent of ribosome"/>
    <property type="evidence" value="ECO:0007669"/>
    <property type="project" value="InterPro"/>
</dbReference>
<dbReference type="GO" id="GO:0017148">
    <property type="term" value="P:negative regulation of translation"/>
    <property type="evidence" value="ECO:0007669"/>
    <property type="project" value="TreeGrafter"/>
</dbReference>
<dbReference type="GO" id="GO:0006412">
    <property type="term" value="P:translation"/>
    <property type="evidence" value="ECO:0007669"/>
    <property type="project" value="UniProtKB-UniRule"/>
</dbReference>
<dbReference type="CDD" id="cd00392">
    <property type="entry name" value="Ribosomal_L13"/>
    <property type="match status" value="1"/>
</dbReference>
<dbReference type="FunFam" id="3.90.1180.10:FF:000001">
    <property type="entry name" value="50S ribosomal protein L13"/>
    <property type="match status" value="1"/>
</dbReference>
<dbReference type="Gene3D" id="3.90.1180.10">
    <property type="entry name" value="Ribosomal protein L13"/>
    <property type="match status" value="1"/>
</dbReference>
<dbReference type="HAMAP" id="MF_01366">
    <property type="entry name" value="Ribosomal_uL13"/>
    <property type="match status" value="1"/>
</dbReference>
<dbReference type="InterPro" id="IPR005822">
    <property type="entry name" value="Ribosomal_uL13"/>
</dbReference>
<dbReference type="InterPro" id="IPR005823">
    <property type="entry name" value="Ribosomal_uL13_bac-type"/>
</dbReference>
<dbReference type="InterPro" id="IPR023563">
    <property type="entry name" value="Ribosomal_uL13_CS"/>
</dbReference>
<dbReference type="InterPro" id="IPR036899">
    <property type="entry name" value="Ribosomal_uL13_sf"/>
</dbReference>
<dbReference type="NCBIfam" id="TIGR01066">
    <property type="entry name" value="rplM_bact"/>
    <property type="match status" value="1"/>
</dbReference>
<dbReference type="PANTHER" id="PTHR11545:SF2">
    <property type="entry name" value="LARGE RIBOSOMAL SUBUNIT PROTEIN UL13M"/>
    <property type="match status" value="1"/>
</dbReference>
<dbReference type="PANTHER" id="PTHR11545">
    <property type="entry name" value="RIBOSOMAL PROTEIN L13"/>
    <property type="match status" value="1"/>
</dbReference>
<dbReference type="Pfam" id="PF00572">
    <property type="entry name" value="Ribosomal_L13"/>
    <property type="match status" value="1"/>
</dbReference>
<dbReference type="PIRSF" id="PIRSF002181">
    <property type="entry name" value="Ribosomal_L13"/>
    <property type="match status" value="1"/>
</dbReference>
<dbReference type="SUPFAM" id="SSF52161">
    <property type="entry name" value="Ribosomal protein L13"/>
    <property type="match status" value="1"/>
</dbReference>
<dbReference type="PROSITE" id="PS00783">
    <property type="entry name" value="RIBOSOMAL_L13"/>
    <property type="match status" value="1"/>
</dbReference>
<name>RL13_MYCM1</name>
<evidence type="ECO:0000255" key="1">
    <source>
        <dbReference type="HAMAP-Rule" id="MF_01366"/>
    </source>
</evidence>
<evidence type="ECO:0000305" key="2"/>